<keyword id="KW-0012">Acyltransferase</keyword>
<keyword id="KW-0028">Amino-acid biosynthesis</keyword>
<keyword id="KW-0963">Cytoplasm</keyword>
<keyword id="KW-0220">Diaminopimelate biosynthesis</keyword>
<keyword id="KW-0457">Lysine biosynthesis</keyword>
<keyword id="KW-1185">Reference proteome</keyword>
<keyword id="KW-0677">Repeat</keyword>
<keyword id="KW-0808">Transferase</keyword>
<accession>B9MJK9</accession>
<feature type="chain" id="PRO_1000148583" description="2,3,4,5-tetrahydropyridine-2,6-dicarboxylate N-succinyltransferase">
    <location>
        <begin position="1"/>
        <end position="274"/>
    </location>
</feature>
<feature type="binding site" evidence="1">
    <location>
        <position position="106"/>
    </location>
    <ligand>
        <name>substrate</name>
    </ligand>
</feature>
<feature type="binding site" evidence="1">
    <location>
        <position position="143"/>
    </location>
    <ligand>
        <name>substrate</name>
    </ligand>
</feature>
<protein>
    <recommendedName>
        <fullName evidence="1">2,3,4,5-tetrahydropyridine-2,6-dicarboxylate N-succinyltransferase</fullName>
        <ecNumber evidence="1">2.3.1.117</ecNumber>
    </recommendedName>
    <alternativeName>
        <fullName evidence="1">Tetrahydrodipicolinate N-succinyltransferase</fullName>
        <shortName evidence="1">THDP succinyltransferase</shortName>
        <shortName evidence="1">THP succinyltransferase</shortName>
        <shortName evidence="1">Tetrahydropicolinate succinylase</shortName>
    </alternativeName>
</protein>
<comment type="catalytic activity">
    <reaction evidence="1">
        <text>(S)-2,3,4,5-tetrahydrodipicolinate + succinyl-CoA + H2O = (S)-2-succinylamino-6-oxoheptanedioate + CoA</text>
        <dbReference type="Rhea" id="RHEA:17325"/>
        <dbReference type="ChEBI" id="CHEBI:15377"/>
        <dbReference type="ChEBI" id="CHEBI:15685"/>
        <dbReference type="ChEBI" id="CHEBI:16845"/>
        <dbReference type="ChEBI" id="CHEBI:57287"/>
        <dbReference type="ChEBI" id="CHEBI:57292"/>
        <dbReference type="EC" id="2.3.1.117"/>
    </reaction>
</comment>
<comment type="pathway">
    <text evidence="1">Amino-acid biosynthesis; L-lysine biosynthesis via DAP pathway; LL-2,6-diaminopimelate from (S)-tetrahydrodipicolinate (succinylase route): step 1/3.</text>
</comment>
<comment type="subunit">
    <text evidence="1">Homotrimer.</text>
</comment>
<comment type="subcellular location">
    <subcellularLocation>
        <location evidence="1">Cytoplasm</location>
    </subcellularLocation>
</comment>
<comment type="similarity">
    <text evidence="1">Belongs to the transferase hexapeptide repeat family.</text>
</comment>
<sequence length="274" mass="29318">MTQQLQTLIDNAWDNRASLSPSAAPKEVVDAVEHVIAELNNGRLRVATREGVGQWTVHQWIKKAVLLSFRLKDNELMKAGDLGFFDKVPTKFAHLSADEMAATGVRVVPPAVARRGSFIAKGAILMPSYVNIGAYVDEGTMVDTWATVGSCAQVGKNVHLSGGVGLGGVLEPLQANPTIIEDNCFIGARSEVVEGVIVEENSVISMGVYIGQSTPIYDRTTGETTYGRVPAGSVVVSGNLPKDGGRYSMYAAIIVKKVDAKTRSTTSLNDLLRD</sequence>
<dbReference type="EC" id="2.3.1.117" evidence="1"/>
<dbReference type="EMBL" id="CP001392">
    <property type="protein sequence ID" value="ACM33347.1"/>
    <property type="molecule type" value="Genomic_DNA"/>
</dbReference>
<dbReference type="RefSeq" id="WP_015913412.1">
    <property type="nucleotide sequence ID" value="NC_011992.1"/>
</dbReference>
<dbReference type="SMR" id="B9MJK9"/>
<dbReference type="KEGG" id="dia:Dtpsy_1890"/>
<dbReference type="eggNOG" id="COG2171">
    <property type="taxonomic scope" value="Bacteria"/>
</dbReference>
<dbReference type="HOGENOM" id="CLU_050859_0_1_4"/>
<dbReference type="UniPathway" id="UPA00034">
    <property type="reaction ID" value="UER00019"/>
</dbReference>
<dbReference type="Proteomes" id="UP000000450">
    <property type="component" value="Chromosome"/>
</dbReference>
<dbReference type="GO" id="GO:0005737">
    <property type="term" value="C:cytoplasm"/>
    <property type="evidence" value="ECO:0007669"/>
    <property type="project" value="UniProtKB-SubCell"/>
</dbReference>
<dbReference type="GO" id="GO:0008666">
    <property type="term" value="F:2,3,4,5-tetrahydropyridine-2,6-dicarboxylate N-succinyltransferase activity"/>
    <property type="evidence" value="ECO:0007669"/>
    <property type="project" value="UniProtKB-UniRule"/>
</dbReference>
<dbReference type="GO" id="GO:0016779">
    <property type="term" value="F:nucleotidyltransferase activity"/>
    <property type="evidence" value="ECO:0007669"/>
    <property type="project" value="TreeGrafter"/>
</dbReference>
<dbReference type="GO" id="GO:0019877">
    <property type="term" value="P:diaminopimelate biosynthetic process"/>
    <property type="evidence" value="ECO:0007669"/>
    <property type="project" value="UniProtKB-UniRule"/>
</dbReference>
<dbReference type="GO" id="GO:0009089">
    <property type="term" value="P:lysine biosynthetic process via diaminopimelate"/>
    <property type="evidence" value="ECO:0007669"/>
    <property type="project" value="UniProtKB-UniRule"/>
</dbReference>
<dbReference type="CDD" id="cd03350">
    <property type="entry name" value="LbH_THP_succinylT"/>
    <property type="match status" value="1"/>
</dbReference>
<dbReference type="Gene3D" id="2.160.10.10">
    <property type="entry name" value="Hexapeptide repeat proteins"/>
    <property type="match status" value="1"/>
</dbReference>
<dbReference type="Gene3D" id="1.10.166.10">
    <property type="entry name" value="Tetrahydrodipicolinate-N-succinyltransferase, N-terminal domain"/>
    <property type="match status" value="1"/>
</dbReference>
<dbReference type="HAMAP" id="MF_00811">
    <property type="entry name" value="DapD"/>
    <property type="match status" value="1"/>
</dbReference>
<dbReference type="InterPro" id="IPR005664">
    <property type="entry name" value="DapD_Trfase_Hexpep_rpt_fam"/>
</dbReference>
<dbReference type="InterPro" id="IPR001451">
    <property type="entry name" value="Hexapep"/>
</dbReference>
<dbReference type="InterPro" id="IPR018357">
    <property type="entry name" value="Hexapep_transf_CS"/>
</dbReference>
<dbReference type="InterPro" id="IPR023180">
    <property type="entry name" value="THP_succinylTrfase_dom1"/>
</dbReference>
<dbReference type="InterPro" id="IPR037133">
    <property type="entry name" value="THP_succinylTrfase_N_sf"/>
</dbReference>
<dbReference type="InterPro" id="IPR011004">
    <property type="entry name" value="Trimer_LpxA-like_sf"/>
</dbReference>
<dbReference type="NCBIfam" id="TIGR00965">
    <property type="entry name" value="dapD"/>
    <property type="match status" value="1"/>
</dbReference>
<dbReference type="NCBIfam" id="NF008808">
    <property type="entry name" value="PRK11830.1"/>
    <property type="match status" value="1"/>
</dbReference>
<dbReference type="PANTHER" id="PTHR19136:SF52">
    <property type="entry name" value="2,3,4,5-TETRAHYDROPYRIDINE-2,6-DICARBOXYLATE N-SUCCINYLTRANSFERASE"/>
    <property type="match status" value="1"/>
</dbReference>
<dbReference type="PANTHER" id="PTHR19136">
    <property type="entry name" value="MOLYBDENUM COFACTOR GUANYLYLTRANSFERASE"/>
    <property type="match status" value="1"/>
</dbReference>
<dbReference type="Pfam" id="PF14602">
    <property type="entry name" value="Hexapep_2"/>
    <property type="match status" value="1"/>
</dbReference>
<dbReference type="Pfam" id="PF14805">
    <property type="entry name" value="THDPS_N_2"/>
    <property type="match status" value="1"/>
</dbReference>
<dbReference type="SUPFAM" id="SSF51161">
    <property type="entry name" value="Trimeric LpxA-like enzymes"/>
    <property type="match status" value="1"/>
</dbReference>
<dbReference type="PROSITE" id="PS00101">
    <property type="entry name" value="HEXAPEP_TRANSFERASES"/>
    <property type="match status" value="1"/>
</dbReference>
<name>DAPD_ACIET</name>
<proteinExistence type="inferred from homology"/>
<gene>
    <name evidence="1" type="primary">dapD</name>
    <name type="ordered locus">Dtpsy_1890</name>
</gene>
<organism>
    <name type="scientific">Acidovorax ebreus (strain TPSY)</name>
    <name type="common">Diaphorobacter sp. (strain TPSY)</name>
    <dbReference type="NCBI Taxonomy" id="535289"/>
    <lineage>
        <taxon>Bacteria</taxon>
        <taxon>Pseudomonadati</taxon>
        <taxon>Pseudomonadota</taxon>
        <taxon>Betaproteobacteria</taxon>
        <taxon>Burkholderiales</taxon>
        <taxon>Comamonadaceae</taxon>
        <taxon>Diaphorobacter</taxon>
    </lineage>
</organism>
<reference key="1">
    <citation type="submission" date="2009-01" db="EMBL/GenBank/DDBJ databases">
        <title>Complete sequence of Diaphorobacter sp. TPSY.</title>
        <authorList>
            <consortium name="US DOE Joint Genome Institute"/>
            <person name="Lucas S."/>
            <person name="Copeland A."/>
            <person name="Lapidus A."/>
            <person name="Glavina del Rio T."/>
            <person name="Tice H."/>
            <person name="Bruce D."/>
            <person name="Goodwin L."/>
            <person name="Pitluck S."/>
            <person name="Chertkov O."/>
            <person name="Brettin T."/>
            <person name="Detter J.C."/>
            <person name="Han C."/>
            <person name="Larimer F."/>
            <person name="Land M."/>
            <person name="Hauser L."/>
            <person name="Kyrpides N."/>
            <person name="Mikhailova N."/>
            <person name="Coates J.D."/>
        </authorList>
    </citation>
    <scope>NUCLEOTIDE SEQUENCE [LARGE SCALE GENOMIC DNA]</scope>
    <source>
        <strain>TPSY</strain>
    </source>
</reference>
<evidence type="ECO:0000255" key="1">
    <source>
        <dbReference type="HAMAP-Rule" id="MF_00811"/>
    </source>
</evidence>